<evidence type="ECO:0000250" key="1"/>
<evidence type="ECO:0000305" key="2"/>
<organism>
    <name type="scientific">Equisetum arvense</name>
    <name type="common">Field horsetail</name>
    <name type="synonym">Common horsetail</name>
    <dbReference type="NCBI Taxonomy" id="3258"/>
    <lineage>
        <taxon>Eukaryota</taxon>
        <taxon>Viridiplantae</taxon>
        <taxon>Streptophyta</taxon>
        <taxon>Embryophyta</taxon>
        <taxon>Tracheophyta</taxon>
        <taxon>Polypodiopsida</taxon>
        <taxon>Equisetidae</taxon>
        <taxon>Equisetales</taxon>
        <taxon>Equisetaceae</taxon>
        <taxon>Equisetum</taxon>
    </lineage>
</organism>
<name>RR4_EQUAR</name>
<proteinExistence type="inferred from homology"/>
<keyword id="KW-0150">Chloroplast</keyword>
<keyword id="KW-0934">Plastid</keyword>
<keyword id="KW-0687">Ribonucleoprotein</keyword>
<keyword id="KW-0689">Ribosomal protein</keyword>
<keyword id="KW-0694">RNA-binding</keyword>
<keyword id="KW-0699">rRNA-binding</keyword>
<accession>Q6H9L6</accession>
<feature type="chain" id="PRO_0000132573" description="Small ribosomal subunit protein uS4c">
    <location>
        <begin position="1"/>
        <end position="207"/>
    </location>
</feature>
<feature type="domain" description="S4 RNA-binding">
    <location>
        <begin position="92"/>
        <end position="156"/>
    </location>
</feature>
<reference key="1">
    <citation type="journal article" date="2004" name="Syst. Bot.">
        <title>Phylogeny of horsetails (Equisetum) based on the chloroplast rps4 gene and adjacent noncoding sequences.</title>
        <authorList>
            <person name="Guillon J.-M."/>
        </authorList>
        <dbReference type="AGRICOLA" id="IND43653535"/>
    </citation>
    <scope>NUCLEOTIDE SEQUENCE [GENOMIC DNA]</scope>
</reference>
<geneLocation type="chloroplast"/>
<comment type="function">
    <text evidence="1">One of the primary rRNA binding proteins, it binds directly to 16S rRNA where it nucleates assembly of the body of the 30S subunit.</text>
</comment>
<comment type="function">
    <text evidence="1">With S5 and S12 plays an important role in translational accuracy.</text>
</comment>
<comment type="subunit">
    <text evidence="1">Part of the 30S ribosomal subunit. Contacts protein S5. The interaction surface between S4 and S5 is involved in control of translational fidelity (By similarity).</text>
</comment>
<comment type="subcellular location">
    <subcellularLocation>
        <location>Plastid</location>
        <location>Chloroplast</location>
    </subcellularLocation>
</comment>
<comment type="similarity">
    <text evidence="2">Belongs to the universal ribosomal protein uS4 family.</text>
</comment>
<gene>
    <name type="primary">rps4</name>
</gene>
<sequence>MSRYRGPRLRIIRRLRNLPGLTNKLVESKKNQASGNDQSNQKKVSQYCIRLEAKQRLRFNYGLTERQLLNYVRIARCAKGSTGQILLQLLEMRLDNILFRLGVVPTIPSARQLINHRHILVNNRIVDIPSFHCKPKDIITIGAPKTYQSIITKRIEAFAKDQIPDHLTLSLSEQKKPKGFVNYLINRESIGLKINELLVVEYYSRKA</sequence>
<protein>
    <recommendedName>
        <fullName evidence="2">Small ribosomal subunit protein uS4c</fullName>
    </recommendedName>
    <alternativeName>
        <fullName>30S ribosomal protein S4, chloroplastic</fullName>
    </alternativeName>
</protein>
<dbReference type="EMBL" id="AJ583677">
    <property type="protein sequence ID" value="CAE47531.1"/>
    <property type="molecule type" value="Genomic_DNA"/>
</dbReference>
<dbReference type="RefSeq" id="YP_004021783.1">
    <property type="nucleotide sequence ID" value="NC_014699.1"/>
</dbReference>
<dbReference type="SMR" id="Q6H9L6"/>
<dbReference type="GeneID" id="9978482"/>
<dbReference type="GO" id="GO:0009507">
    <property type="term" value="C:chloroplast"/>
    <property type="evidence" value="ECO:0007669"/>
    <property type="project" value="UniProtKB-SubCell"/>
</dbReference>
<dbReference type="GO" id="GO:0015935">
    <property type="term" value="C:small ribosomal subunit"/>
    <property type="evidence" value="ECO:0007669"/>
    <property type="project" value="InterPro"/>
</dbReference>
<dbReference type="GO" id="GO:0019843">
    <property type="term" value="F:rRNA binding"/>
    <property type="evidence" value="ECO:0007669"/>
    <property type="project" value="UniProtKB-UniRule"/>
</dbReference>
<dbReference type="GO" id="GO:0003735">
    <property type="term" value="F:structural constituent of ribosome"/>
    <property type="evidence" value="ECO:0007669"/>
    <property type="project" value="InterPro"/>
</dbReference>
<dbReference type="GO" id="GO:0042274">
    <property type="term" value="P:ribosomal small subunit biogenesis"/>
    <property type="evidence" value="ECO:0007669"/>
    <property type="project" value="TreeGrafter"/>
</dbReference>
<dbReference type="GO" id="GO:0006412">
    <property type="term" value="P:translation"/>
    <property type="evidence" value="ECO:0007669"/>
    <property type="project" value="UniProtKB-UniRule"/>
</dbReference>
<dbReference type="CDD" id="cd00165">
    <property type="entry name" value="S4"/>
    <property type="match status" value="1"/>
</dbReference>
<dbReference type="FunFam" id="3.10.290.10:FF:000001">
    <property type="entry name" value="30S ribosomal protein S4"/>
    <property type="match status" value="1"/>
</dbReference>
<dbReference type="FunFam" id="1.10.1050.10:FF:000002">
    <property type="entry name" value="30S ribosomal protein S4, chloroplastic"/>
    <property type="match status" value="1"/>
</dbReference>
<dbReference type="Gene3D" id="1.10.1050.10">
    <property type="entry name" value="Ribosomal Protein S4 Delta 41, Chain A, domain 1"/>
    <property type="match status" value="1"/>
</dbReference>
<dbReference type="Gene3D" id="3.10.290.10">
    <property type="entry name" value="RNA-binding S4 domain"/>
    <property type="match status" value="1"/>
</dbReference>
<dbReference type="HAMAP" id="MF_01306_B">
    <property type="entry name" value="Ribosomal_uS4_B"/>
    <property type="match status" value="1"/>
</dbReference>
<dbReference type="InterPro" id="IPR022801">
    <property type="entry name" value="Ribosomal_uS4"/>
</dbReference>
<dbReference type="InterPro" id="IPR005709">
    <property type="entry name" value="Ribosomal_uS4_bac-type"/>
</dbReference>
<dbReference type="InterPro" id="IPR018079">
    <property type="entry name" value="Ribosomal_uS4_CS"/>
</dbReference>
<dbReference type="InterPro" id="IPR001912">
    <property type="entry name" value="Ribosomal_uS4_N"/>
</dbReference>
<dbReference type="InterPro" id="IPR002942">
    <property type="entry name" value="S4_RNA-bd"/>
</dbReference>
<dbReference type="InterPro" id="IPR036986">
    <property type="entry name" value="S4_RNA-bd_sf"/>
</dbReference>
<dbReference type="NCBIfam" id="NF003717">
    <property type="entry name" value="PRK05327.1"/>
    <property type="match status" value="1"/>
</dbReference>
<dbReference type="NCBIfam" id="TIGR01017">
    <property type="entry name" value="rpsD_bact"/>
    <property type="match status" value="1"/>
</dbReference>
<dbReference type="PANTHER" id="PTHR11831">
    <property type="entry name" value="30S 40S RIBOSOMAL PROTEIN"/>
    <property type="match status" value="1"/>
</dbReference>
<dbReference type="PANTHER" id="PTHR11831:SF4">
    <property type="entry name" value="SMALL RIBOSOMAL SUBUNIT PROTEIN US4M"/>
    <property type="match status" value="1"/>
</dbReference>
<dbReference type="Pfam" id="PF00163">
    <property type="entry name" value="Ribosomal_S4"/>
    <property type="match status" value="1"/>
</dbReference>
<dbReference type="Pfam" id="PF01479">
    <property type="entry name" value="S4"/>
    <property type="match status" value="1"/>
</dbReference>
<dbReference type="SMART" id="SM01390">
    <property type="entry name" value="Ribosomal_S4"/>
    <property type="match status" value="1"/>
</dbReference>
<dbReference type="SMART" id="SM00363">
    <property type="entry name" value="S4"/>
    <property type="match status" value="1"/>
</dbReference>
<dbReference type="SUPFAM" id="SSF55174">
    <property type="entry name" value="Alpha-L RNA-binding motif"/>
    <property type="match status" value="1"/>
</dbReference>
<dbReference type="PROSITE" id="PS00632">
    <property type="entry name" value="RIBOSOMAL_S4"/>
    <property type="match status" value="1"/>
</dbReference>
<dbReference type="PROSITE" id="PS50889">
    <property type="entry name" value="S4"/>
    <property type="match status" value="1"/>
</dbReference>